<reference key="1">
    <citation type="journal article" date="1994" name="Yeast">
        <title>Consideration of the evolution of the Saccharomyces cerevisiae MEL gene family on the basis of the nucleotide sequences of the genes and their flanking regions.</title>
        <authorList>
            <person name="Turakainen H."/>
            <person name="Kristo P."/>
            <person name="Korhola M."/>
        </authorList>
    </citation>
    <scope>NUCLEOTIDE SEQUENCE [GENOMIC DNA]</scope>
</reference>
<organism>
    <name type="scientific">Saccharomyces cerevisiae</name>
    <name type="common">Baker's yeast</name>
    <dbReference type="NCBI Taxonomy" id="4932"/>
    <lineage>
        <taxon>Eukaryota</taxon>
        <taxon>Fungi</taxon>
        <taxon>Dikarya</taxon>
        <taxon>Ascomycota</taxon>
        <taxon>Saccharomycotina</taxon>
        <taxon>Saccharomycetes</taxon>
        <taxon>Saccharomycetales</taxon>
        <taxon>Saccharomycetaceae</taxon>
        <taxon>Saccharomyces</taxon>
    </lineage>
</organism>
<accession>P41946</accession>
<protein>
    <recommendedName>
        <fullName>Alpha-galactosidase 5</fullName>
        <ecNumber>3.2.1.22</ecNumber>
    </recommendedName>
    <alternativeName>
        <fullName>Alpha-D-galactoside galactohydrolase 5</fullName>
    </alternativeName>
    <alternativeName>
        <fullName>Melibiase 5</fullName>
    </alternativeName>
</protein>
<proteinExistence type="inferred from homology"/>
<sequence>MFAFYFLTACTTLKGVFGVSPSYNGLGLTPQMGWDSWNTFACDVSEQLLLDTADRISDLGLKDMGYKYVILDDCWSSGRDSDGFLVADKHKFPNGMGHVADHLHNNSFLFGMYSSAGEYTCAGYPGSLGREEEDAQFFANNRVDYLKYDNCYNKGQFGTPDVSYHRYKAMSDALNKTGRPIFYSLCNWGQDLTFYWGSGIANSWRMSGDITAEFTRPDSRCPCDGDEYDCKYAGFHCSIMNILNKAAPMGQNAGVGGWNDLDNLEVGVGNLTDDEEKAHFSMWAMVKSPLIIGADVNHLKASSYSIYSQASVIAINQDPKGIPATRVWRYYVSDTDEYGQGEIQMWSGPLDNGDQVVALLNGGSVARPMNTTLEEIFFDSNLGSKELTSTWDIYDLWANRVDNSTASAILEQNKAATGILYNATEQSYKDGLSKNDTRLFGQKIGSLSPNAILNTTVPAHGIAFYRLRPSA</sequence>
<evidence type="ECO:0000250" key="1"/>
<evidence type="ECO:0000255" key="2"/>
<evidence type="ECO:0000305" key="3"/>
<name>MEL5_YEASX</name>
<keyword id="KW-1015">Disulfide bond</keyword>
<keyword id="KW-0325">Glycoprotein</keyword>
<keyword id="KW-0326">Glycosidase</keyword>
<keyword id="KW-0378">Hydrolase</keyword>
<keyword id="KW-0964">Secreted</keyword>
<keyword id="KW-0732">Signal</keyword>
<feature type="signal peptide" evidence="1">
    <location>
        <begin position="1"/>
        <end position="18"/>
    </location>
</feature>
<feature type="chain" id="PRO_0000001015" description="Alpha-galactosidase 5">
    <location>
        <begin position="19"/>
        <end position="471"/>
    </location>
</feature>
<feature type="active site" description="Nucleophile" evidence="1">
    <location>
        <position position="149"/>
    </location>
</feature>
<feature type="active site" description="Proton donor" evidence="1">
    <location>
        <position position="209"/>
    </location>
</feature>
<feature type="binding site" evidence="1">
    <location>
        <position position="72"/>
    </location>
    <ligand>
        <name>substrate</name>
    </ligand>
</feature>
<feature type="binding site" evidence="1">
    <location>
        <position position="73"/>
    </location>
    <ligand>
        <name>substrate</name>
    </ligand>
</feature>
<feature type="binding site" evidence="1">
    <location>
        <position position="147"/>
    </location>
    <ligand>
        <name>substrate</name>
    </ligand>
</feature>
<feature type="binding site" evidence="1">
    <location>
        <position position="205"/>
    </location>
    <ligand>
        <name>substrate</name>
    </ligand>
</feature>
<feature type="binding site" evidence="1">
    <location>
        <position position="251"/>
    </location>
    <ligand>
        <name>substrate</name>
    </ligand>
</feature>
<feature type="glycosylation site" description="N-linked (GlcNAc...) asparagine" evidence="2">
    <location>
        <position position="105"/>
    </location>
</feature>
<feature type="glycosylation site" description="N-linked (GlcNAc...) asparagine" evidence="2">
    <location>
        <position position="175"/>
    </location>
</feature>
<feature type="glycosylation site" description="N-linked (GlcNAc...) asparagine" evidence="2">
    <location>
        <position position="270"/>
    </location>
</feature>
<feature type="glycosylation site" description="N-linked (GlcNAc...) asparagine" evidence="2">
    <location>
        <position position="370"/>
    </location>
</feature>
<feature type="glycosylation site" description="N-linked (GlcNAc...) asparagine" evidence="2">
    <location>
        <position position="403"/>
    </location>
</feature>
<feature type="glycosylation site" description="N-linked (GlcNAc...) asparagine" evidence="2">
    <location>
        <position position="422"/>
    </location>
</feature>
<feature type="glycosylation site" description="N-linked (GlcNAc...) asparagine" evidence="2">
    <location>
        <position position="435"/>
    </location>
</feature>
<feature type="glycosylation site" description="N-linked (GlcNAc...) asparagine" evidence="2">
    <location>
        <position position="454"/>
    </location>
</feature>
<feature type="disulfide bond" evidence="1">
    <location>
        <begin position="42"/>
        <end position="74"/>
    </location>
</feature>
<feature type="disulfide bond" evidence="1">
    <location>
        <begin position="121"/>
        <end position="151"/>
    </location>
</feature>
<feature type="disulfide bond" evidence="1">
    <location>
        <begin position="221"/>
        <end position="237"/>
    </location>
</feature>
<feature type="disulfide bond" evidence="1">
    <location>
        <begin position="223"/>
        <end position="230"/>
    </location>
</feature>
<dbReference type="EC" id="3.2.1.22"/>
<dbReference type="EMBL" id="Z37511">
    <property type="protein sequence ID" value="CAA85740.1"/>
    <property type="molecule type" value="Genomic_DNA"/>
</dbReference>
<dbReference type="PIR" id="S50311">
    <property type="entry name" value="S50311"/>
</dbReference>
<dbReference type="SMR" id="P41946"/>
<dbReference type="CAZy" id="GH27">
    <property type="family name" value="Glycoside Hydrolase Family 27"/>
</dbReference>
<dbReference type="GlyCosmos" id="P41946">
    <property type="glycosylation" value="8 sites, No reported glycans"/>
</dbReference>
<dbReference type="SGD" id="S000029664">
    <property type="gene designation" value="MEL5"/>
</dbReference>
<dbReference type="GO" id="GO:0005576">
    <property type="term" value="C:extracellular region"/>
    <property type="evidence" value="ECO:0007669"/>
    <property type="project" value="UniProtKB-SubCell"/>
</dbReference>
<dbReference type="GO" id="GO:0004557">
    <property type="term" value="F:alpha-galactosidase activity"/>
    <property type="evidence" value="ECO:0000250"/>
    <property type="project" value="SGD"/>
</dbReference>
<dbReference type="GO" id="GO:0005995">
    <property type="term" value="P:melibiose catabolic process"/>
    <property type="evidence" value="ECO:0000315"/>
    <property type="project" value="SGD"/>
</dbReference>
<dbReference type="CDD" id="cd14792">
    <property type="entry name" value="GH27"/>
    <property type="match status" value="1"/>
</dbReference>
<dbReference type="FunFam" id="3.20.20.70:FF:000202">
    <property type="entry name" value="Alpha-galactosidase"/>
    <property type="match status" value="1"/>
</dbReference>
<dbReference type="Gene3D" id="3.20.20.70">
    <property type="entry name" value="Aldolase class I"/>
    <property type="match status" value="1"/>
</dbReference>
<dbReference type="Gene3D" id="2.60.40.1180">
    <property type="entry name" value="Golgi alpha-mannosidase II"/>
    <property type="match status" value="1"/>
</dbReference>
<dbReference type="InterPro" id="IPR013785">
    <property type="entry name" value="Aldolase_TIM"/>
</dbReference>
<dbReference type="InterPro" id="IPR002241">
    <property type="entry name" value="Glyco_hydro_27"/>
</dbReference>
<dbReference type="InterPro" id="IPR000111">
    <property type="entry name" value="Glyco_hydro_27/36_CS"/>
</dbReference>
<dbReference type="InterPro" id="IPR013780">
    <property type="entry name" value="Glyco_hydro_b"/>
</dbReference>
<dbReference type="InterPro" id="IPR006215">
    <property type="entry name" value="Glyco_hydro_melibiase"/>
</dbReference>
<dbReference type="InterPro" id="IPR017853">
    <property type="entry name" value="Glycoside_hydrolase_SF"/>
</dbReference>
<dbReference type="InterPro" id="IPR041233">
    <property type="entry name" value="Melibiase_C"/>
</dbReference>
<dbReference type="PANTHER" id="PTHR11452:SF75">
    <property type="entry name" value="ALPHA-GALACTOSIDASE MEL1"/>
    <property type="match status" value="1"/>
</dbReference>
<dbReference type="PANTHER" id="PTHR11452">
    <property type="entry name" value="ALPHA-GALACTOSIDASE/ALPHA-N-ACETYLGALACTOSAMINIDASE"/>
    <property type="match status" value="1"/>
</dbReference>
<dbReference type="Pfam" id="PF16499">
    <property type="entry name" value="Melibiase_2"/>
    <property type="match status" value="1"/>
</dbReference>
<dbReference type="Pfam" id="PF17801">
    <property type="entry name" value="Melibiase_C"/>
    <property type="match status" value="1"/>
</dbReference>
<dbReference type="PRINTS" id="PR00740">
    <property type="entry name" value="GLHYDRLASE27"/>
</dbReference>
<dbReference type="PRINTS" id="PR00748">
    <property type="entry name" value="MELIBIASE"/>
</dbReference>
<dbReference type="SUPFAM" id="SSF51445">
    <property type="entry name" value="(Trans)glycosidases"/>
    <property type="match status" value="1"/>
</dbReference>
<dbReference type="SUPFAM" id="SSF51011">
    <property type="entry name" value="Glycosyl hydrolase domain"/>
    <property type="match status" value="1"/>
</dbReference>
<dbReference type="PROSITE" id="PS00512">
    <property type="entry name" value="ALPHA_GALACTOSIDASE"/>
    <property type="match status" value="1"/>
</dbReference>
<comment type="catalytic activity">
    <reaction>
        <text>Hydrolysis of terminal, non-reducing alpha-D-galactose residues in alpha-D-galactosides, including galactose oligosaccharides, galactomannans and galactolipids.</text>
        <dbReference type="EC" id="3.2.1.22"/>
    </reaction>
</comment>
<comment type="subunit">
    <text evidence="1">Homotetramer.</text>
</comment>
<comment type="subcellular location">
    <subcellularLocation>
        <location evidence="1">Secreted</location>
    </subcellularLocation>
</comment>
<comment type="similarity">
    <text evidence="3">Belongs to the glycosyl hydrolase 27 family.</text>
</comment>
<gene>
    <name type="primary">MEL5</name>
</gene>